<accession>Q9WY63</accession>
<dbReference type="EMBL" id="AE000512">
    <property type="protein sequence ID" value="AAD35312.1"/>
    <property type="molecule type" value="Genomic_DNA"/>
</dbReference>
<dbReference type="PIR" id="F72404">
    <property type="entry name" value="F72404"/>
</dbReference>
<dbReference type="RefSeq" id="NP_228035.1">
    <property type="nucleotide sequence ID" value="NC_000853.1"/>
</dbReference>
<dbReference type="RefSeq" id="WP_004082903.1">
    <property type="nucleotide sequence ID" value="NC_000853.1"/>
</dbReference>
<dbReference type="PDB" id="1LKV">
    <property type="method" value="X-ray"/>
    <property type="resolution" value="2.80 A"/>
    <property type="chains" value="X=104-335"/>
</dbReference>
<dbReference type="PDB" id="1QC7">
    <property type="method" value="X-ray"/>
    <property type="resolution" value="2.20 A"/>
    <property type="chains" value="A/B=235-335"/>
</dbReference>
<dbReference type="PDB" id="3AJC">
    <property type="method" value="X-ray"/>
    <property type="resolution" value="2.30 A"/>
    <property type="chains" value="A=104-335"/>
</dbReference>
<dbReference type="PDB" id="3SOH">
    <property type="method" value="X-ray"/>
    <property type="resolution" value="3.50 A"/>
    <property type="chains" value="B/D=117-193"/>
</dbReference>
<dbReference type="PDB" id="4FHR">
    <property type="method" value="X-ray"/>
    <property type="resolution" value="1.93 A"/>
    <property type="chains" value="B=115-327"/>
</dbReference>
<dbReference type="PDB" id="4QRM">
    <property type="method" value="X-ray"/>
    <property type="resolution" value="4.32 A"/>
    <property type="chains" value="B/D/F/H/J/L/N/P/R/T/V=117-187"/>
</dbReference>
<dbReference type="PDB" id="5TDY">
    <property type="method" value="X-ray"/>
    <property type="resolution" value="2.10 A"/>
    <property type="chains" value="B/D=1-98"/>
</dbReference>
<dbReference type="PDBsum" id="1LKV"/>
<dbReference type="PDBsum" id="1QC7"/>
<dbReference type="PDBsum" id="3AJC"/>
<dbReference type="PDBsum" id="3SOH"/>
<dbReference type="PDBsum" id="4FHR"/>
<dbReference type="PDBsum" id="4QRM"/>
<dbReference type="PDBsum" id="5TDY"/>
<dbReference type="BMRB" id="Q9WY63"/>
<dbReference type="SMR" id="Q9WY63"/>
<dbReference type="FunCoup" id="Q9WY63">
    <property type="interactions" value="89"/>
</dbReference>
<dbReference type="IntAct" id="Q9WY63">
    <property type="interactions" value="1"/>
</dbReference>
<dbReference type="MINT" id="Q9WY63"/>
<dbReference type="STRING" id="243274.TM_0220"/>
<dbReference type="PaxDb" id="243274-THEMA_03625"/>
<dbReference type="EnsemblBacteria" id="AAD35312">
    <property type="protein sequence ID" value="AAD35312"/>
    <property type="gene ID" value="TM_0220"/>
</dbReference>
<dbReference type="KEGG" id="tma:TM0220"/>
<dbReference type="KEGG" id="tmi:THEMA_03625"/>
<dbReference type="KEGG" id="tmm:Tmari_0218"/>
<dbReference type="KEGG" id="tmw:THMA_0227"/>
<dbReference type="eggNOG" id="COG1536">
    <property type="taxonomic scope" value="Bacteria"/>
</dbReference>
<dbReference type="InParanoid" id="Q9WY63"/>
<dbReference type="OrthoDB" id="9780302at2"/>
<dbReference type="EvolutionaryTrace" id="Q9WY63"/>
<dbReference type="Proteomes" id="UP000008183">
    <property type="component" value="Chromosome"/>
</dbReference>
<dbReference type="GO" id="GO:0009425">
    <property type="term" value="C:bacterial-type flagellum basal body"/>
    <property type="evidence" value="ECO:0007669"/>
    <property type="project" value="UniProtKB-SubCell"/>
</dbReference>
<dbReference type="GO" id="GO:0005886">
    <property type="term" value="C:plasma membrane"/>
    <property type="evidence" value="ECO:0007669"/>
    <property type="project" value="UniProtKB-SubCell"/>
</dbReference>
<dbReference type="GO" id="GO:0003774">
    <property type="term" value="F:cytoskeletal motor activity"/>
    <property type="evidence" value="ECO:0007669"/>
    <property type="project" value="InterPro"/>
</dbReference>
<dbReference type="GO" id="GO:0046982">
    <property type="term" value="F:protein heterodimerization activity"/>
    <property type="evidence" value="ECO:0000314"/>
    <property type="project" value="UniProtKB"/>
</dbReference>
<dbReference type="GO" id="GO:0042803">
    <property type="term" value="F:protein homodimerization activity"/>
    <property type="evidence" value="ECO:0000314"/>
    <property type="project" value="UniProtKB"/>
</dbReference>
<dbReference type="GO" id="GO:0071973">
    <property type="term" value="P:bacterial-type flagellum-dependent cell motility"/>
    <property type="evidence" value="ECO:0000318"/>
    <property type="project" value="GO_Central"/>
</dbReference>
<dbReference type="GO" id="GO:0006935">
    <property type="term" value="P:chemotaxis"/>
    <property type="evidence" value="ECO:0007669"/>
    <property type="project" value="UniProtKB-KW"/>
</dbReference>
<dbReference type="FunFam" id="1.10.220.30:FF:000001">
    <property type="entry name" value="Flagellar motor switch protein FliG"/>
    <property type="match status" value="1"/>
</dbReference>
<dbReference type="Gene3D" id="1.10.220.30">
    <property type="match status" value="3"/>
</dbReference>
<dbReference type="InterPro" id="IPR000090">
    <property type="entry name" value="Flg_Motor_Flig"/>
</dbReference>
<dbReference type="InterPro" id="IPR023087">
    <property type="entry name" value="Flg_Motor_Flig_C"/>
</dbReference>
<dbReference type="InterPro" id="IPR011002">
    <property type="entry name" value="FliG_a-hlx"/>
</dbReference>
<dbReference type="InterPro" id="IPR032779">
    <property type="entry name" value="FliG_M"/>
</dbReference>
<dbReference type="InterPro" id="IPR028263">
    <property type="entry name" value="FliG_N"/>
</dbReference>
<dbReference type="NCBIfam" id="TIGR00207">
    <property type="entry name" value="fliG"/>
    <property type="match status" value="1"/>
</dbReference>
<dbReference type="PANTHER" id="PTHR30534">
    <property type="entry name" value="FLAGELLAR MOTOR SWITCH PROTEIN FLIG"/>
    <property type="match status" value="1"/>
</dbReference>
<dbReference type="PANTHER" id="PTHR30534:SF0">
    <property type="entry name" value="FLAGELLAR MOTOR SWITCH PROTEIN FLIG"/>
    <property type="match status" value="1"/>
</dbReference>
<dbReference type="Pfam" id="PF01706">
    <property type="entry name" value="FliG_C"/>
    <property type="match status" value="1"/>
</dbReference>
<dbReference type="Pfam" id="PF14841">
    <property type="entry name" value="FliG_M"/>
    <property type="match status" value="1"/>
</dbReference>
<dbReference type="Pfam" id="PF14842">
    <property type="entry name" value="FliG_N"/>
    <property type="match status" value="1"/>
</dbReference>
<dbReference type="PIRSF" id="PIRSF003161">
    <property type="entry name" value="FliG"/>
    <property type="match status" value="1"/>
</dbReference>
<dbReference type="PRINTS" id="PR00954">
    <property type="entry name" value="FLGMOTORFLIG"/>
</dbReference>
<dbReference type="SUPFAM" id="SSF48029">
    <property type="entry name" value="FliG"/>
    <property type="match status" value="2"/>
</dbReference>
<proteinExistence type="evidence at protein level"/>
<name>FLIG_THEMA</name>
<sequence length="335" mass="37816">MPEKKIDGRRKAAVLLVALGPEKAAQVMKHLDEETVEQLVVEIANIGRVTPEEKKQVLEEFLSLAKAKEMISEGGIEYAKKVLEKAFGPERARKIIERLTSSLQVKPFSFVRDTDPVQLVNFLQSEHPQTIAVVLSYLDPPVAAQILGALPEELQTEVLKRIALLERTSPEVVKEIERNLEKKISGFVSRTFSKVGGIDTAAEIMNNLDRTTEKKIMDKLVQENPELADEIRRRMFVFEDILKLDDRSIQLVLREVDTRDLALALKGASDELKEKIFKNMSKRAAALLKDELEYMGPVRLKDVEEAQQKIINIIRRLEEAGEIVIARGGGEELIM</sequence>
<organism>
    <name type="scientific">Thermotoga maritima (strain ATCC 43589 / DSM 3109 / JCM 10099 / NBRC 100826 / MSB8)</name>
    <dbReference type="NCBI Taxonomy" id="243274"/>
    <lineage>
        <taxon>Bacteria</taxon>
        <taxon>Thermotogati</taxon>
        <taxon>Thermotogota</taxon>
        <taxon>Thermotogae</taxon>
        <taxon>Thermotogales</taxon>
        <taxon>Thermotogaceae</taxon>
        <taxon>Thermotoga</taxon>
    </lineage>
</organism>
<gene>
    <name type="primary">fliG</name>
    <name type="ordered locus">TM_0220</name>
</gene>
<keyword id="KW-0002">3D-structure</keyword>
<keyword id="KW-0975">Bacterial flagellum</keyword>
<keyword id="KW-0997">Cell inner membrane</keyword>
<keyword id="KW-1003">Cell membrane</keyword>
<keyword id="KW-0145">Chemotaxis</keyword>
<keyword id="KW-0903">Direct protein sequencing</keyword>
<keyword id="KW-0283">Flagellar rotation</keyword>
<keyword id="KW-0472">Membrane</keyword>
<keyword id="KW-1185">Reference proteome</keyword>
<evidence type="ECO:0000250" key="1"/>
<evidence type="ECO:0000269" key="2">
    <source>
    </source>
</evidence>
<evidence type="ECO:0000269" key="3">
    <source>
    </source>
</evidence>
<evidence type="ECO:0000269" key="4">
    <source>
    </source>
</evidence>
<evidence type="ECO:0000305" key="5"/>
<evidence type="ECO:0007829" key="6">
    <source>
        <dbReference type="PDB" id="3AJC"/>
    </source>
</evidence>
<evidence type="ECO:0007829" key="7">
    <source>
        <dbReference type="PDB" id="3SOH"/>
    </source>
</evidence>
<evidence type="ECO:0007829" key="8">
    <source>
        <dbReference type="PDB" id="4FHR"/>
    </source>
</evidence>
<evidence type="ECO:0007829" key="9">
    <source>
        <dbReference type="PDB" id="5TDY"/>
    </source>
</evidence>
<reference key="1">
    <citation type="journal article" date="1999" name="Nature">
        <title>Evidence for lateral gene transfer between Archaea and Bacteria from genome sequence of Thermotoga maritima.</title>
        <authorList>
            <person name="Nelson K.E."/>
            <person name="Clayton R.A."/>
            <person name="Gill S.R."/>
            <person name="Gwinn M.L."/>
            <person name="Dodson R.J."/>
            <person name="Haft D.H."/>
            <person name="Hickey E.K."/>
            <person name="Peterson J.D."/>
            <person name="Nelson W.C."/>
            <person name="Ketchum K.A."/>
            <person name="McDonald L.A."/>
            <person name="Utterback T.R."/>
            <person name="Malek J.A."/>
            <person name="Linher K.D."/>
            <person name="Garrett M.M."/>
            <person name="Stewart A.M."/>
            <person name="Cotton M.D."/>
            <person name="Pratt M.S."/>
            <person name="Phillips C.A."/>
            <person name="Richardson D.L."/>
            <person name="Heidelberg J.F."/>
            <person name="Sutton G.G."/>
            <person name="Fleischmann R.D."/>
            <person name="Eisen J.A."/>
            <person name="White O."/>
            <person name="Salzberg S.L."/>
            <person name="Smith H.O."/>
            <person name="Venter J.C."/>
            <person name="Fraser C.M."/>
        </authorList>
    </citation>
    <scope>NUCLEOTIDE SEQUENCE [LARGE SCALE GENOMIC DNA]</scope>
    <source>
        <strain>ATCC 43589 / DSM 3109 / JCM 10099 / NBRC 100826 / MSB8</strain>
    </source>
</reference>
<reference key="2">
    <citation type="journal article" date="1999" name="Nature">
        <title>Structure of the C-terminal domain of FliG, a component of the rotor in the bacterial flagellar motor.</title>
        <authorList>
            <person name="Lloyd S.A."/>
            <person name="Whitby F.G."/>
            <person name="Blair D.F."/>
            <person name="Hill C.P."/>
        </authorList>
    </citation>
    <scope>PROTEIN SEQUENCE OF 209-214</scope>
    <scope>X-RAY CRYSTALLOGRAPHY (2.2 ANGSTROMS) OF 235-335</scope>
</reference>
<reference key="3">
    <citation type="journal article" date="2012" name="Biochemistry">
        <title>Structural insights into the interaction between the bacterial flagellar motor proteins FliF and FliG.</title>
        <authorList>
            <person name="Levenson R."/>
            <person name="Zhou H."/>
            <person name="Dahlquist F.W."/>
        </authorList>
    </citation>
    <scope>SUBUNIT</scope>
    <scope>INTERACTION WITH FLIF</scope>
    <scope>NMR AND FLUORESCENCE SPECTROSCOPY OF N-TERMINUS</scope>
</reference>
<reference key="4">
    <citation type="journal article" date="2002" name="EMBO J.">
        <title>Crystal structure of the middle and C-terminal domains of the flagellar rotor protein FliG.</title>
        <authorList>
            <person name="Brown P.N."/>
            <person name="Hill C.P."/>
            <person name="Blair D.F."/>
        </authorList>
    </citation>
    <scope>X-RAY CRYSTALLOGRAPHY (2.80 ANGSTROMS) OF 104-335</scope>
</reference>
<reference key="5">
    <citation type="journal article" date="2011" name="EMBO J.">
        <title>Architecture of the flagellar rotor.</title>
        <authorList>
            <person name="Paul K."/>
            <person name="Gonzalez-Bonet G."/>
            <person name="Bilwes A.M."/>
            <person name="Crane B.R."/>
            <person name="Blair D."/>
        </authorList>
    </citation>
    <scope>X-RAY CRYSTALLOGRAPHY (3.50 ANGSTROMS) OF 117-193 IN COMPLEX WITH FLIM</scope>
    <scope>INTERACTION WITH FLIM</scope>
    <scope>MOTIF</scope>
</reference>
<reference key="6">
    <citation type="journal article" date="2011" name="PLoS Biol.">
        <title>Structural insight into the rotational switching mechanism of the bacterial flagellar motor.</title>
        <authorList>
            <person name="Minamino T."/>
            <person name="Imada K."/>
            <person name="Kinoshita M."/>
            <person name="Nakamura S."/>
            <person name="Morimoto Y.V."/>
            <person name="Namba K."/>
        </authorList>
    </citation>
    <scope>X-RAY CRYSTALLOGRAPHY (2.30 ANGSTROMS) OF 104-335 OF MUTANT DEL 170-172</scope>
</reference>
<reference key="7">
    <citation type="journal article" date="2012" name="J. Biol. Chem.">
        <title>Structure of flagellar motor proteins in complex allows for insights into motor structure and switching.</title>
        <authorList>
            <person name="Vartanian A.S."/>
            <person name="Paz A."/>
            <person name="Fortgang E.A."/>
            <person name="Abramson J."/>
            <person name="Dahlquist F.W."/>
        </authorList>
    </citation>
    <scope>X-RAY CRYSTALLOGRAPHY (1.93 ANGSTROMS) OF 115-327 IN COMPLEX WITH FLIM</scope>
    <scope>INTERACTION WITH FLIM</scope>
</reference>
<comment type="function">
    <text evidence="1">One of the proteins that forms a switch complex that is proposed to be located at the base of the basal body. This complex interacts with chemotaxis proteins (such as CheY) in addition to contacting components of the motor that determine the direction of flagellar rotation (By similarity).</text>
</comment>
<comment type="subunit">
    <text evidence="2 3 4">Homodimer in the absence of FliF. Interacts (via N-terminus) with FliF (via C-terminus) forming a heterodimer. Interacts (via central domain or via central domain and C-terminus) with FliM (via central domain).</text>
</comment>
<comment type="subcellular location">
    <subcellularLocation>
        <location evidence="1">Cell inner membrane</location>
        <topology evidence="1">Peripheral membrane protein</topology>
        <orientation evidence="1">Cytoplasmic side</orientation>
    </subcellularLocation>
    <subcellularLocation>
        <location evidence="1">Bacterial flagellum basal body</location>
    </subcellularLocation>
</comment>
<comment type="similarity">
    <text evidence="5">Belongs to the FliG family.</text>
</comment>
<feature type="chain" id="PRO_0000184097" description="Flagellar motor switch protein FliG">
    <location>
        <begin position="1"/>
        <end position="335"/>
    </location>
</feature>
<feature type="short sequence motif" description="Part of the EHPQR-motif; important for interaction with FliM">
    <location>
        <begin position="126"/>
        <end position="129"/>
    </location>
</feature>
<feature type="site" description="Part of the EHPQR-motif; important for interaction with FliM">
    <location>
        <position position="161"/>
    </location>
</feature>
<feature type="helix" evidence="9">
    <location>
        <begin position="8"/>
        <end position="19"/>
    </location>
</feature>
<feature type="helix" evidence="9">
    <location>
        <begin position="21"/>
        <end position="28"/>
    </location>
</feature>
<feature type="helix" evidence="9">
    <location>
        <begin position="33"/>
        <end position="44"/>
    </location>
</feature>
<feature type="helix" evidence="9">
    <location>
        <begin position="51"/>
        <end position="66"/>
    </location>
</feature>
<feature type="helix" evidence="9">
    <location>
        <begin position="75"/>
        <end position="87"/>
    </location>
</feature>
<feature type="helix" evidence="9">
    <location>
        <begin position="89"/>
        <end position="95"/>
    </location>
</feature>
<feature type="helix" evidence="6">
    <location>
        <begin position="109"/>
        <end position="111"/>
    </location>
</feature>
<feature type="helix" evidence="8">
    <location>
        <begin position="116"/>
        <end position="123"/>
    </location>
</feature>
<feature type="helix" evidence="8">
    <location>
        <begin position="128"/>
        <end position="136"/>
    </location>
</feature>
<feature type="helix" evidence="8">
    <location>
        <begin position="140"/>
        <end position="148"/>
    </location>
</feature>
<feature type="helix" evidence="8">
    <location>
        <begin position="152"/>
        <end position="154"/>
    </location>
</feature>
<feature type="helix" evidence="8">
    <location>
        <begin position="155"/>
        <end position="164"/>
    </location>
</feature>
<feature type="helix" evidence="8">
    <location>
        <begin position="170"/>
        <end position="183"/>
    </location>
</feature>
<feature type="helix" evidence="7">
    <location>
        <begin position="190"/>
        <end position="192"/>
    </location>
</feature>
<feature type="helix" evidence="8">
    <location>
        <begin position="198"/>
        <end position="207"/>
    </location>
</feature>
<feature type="helix" evidence="8">
    <location>
        <begin position="210"/>
        <end position="223"/>
    </location>
</feature>
<feature type="helix" evidence="8">
    <location>
        <begin position="225"/>
        <end position="235"/>
    </location>
</feature>
<feature type="helix" evidence="8">
    <location>
        <begin position="238"/>
        <end position="243"/>
    </location>
</feature>
<feature type="helix" evidence="8">
    <location>
        <begin position="246"/>
        <end position="253"/>
    </location>
</feature>
<feature type="helix" evidence="8">
    <location>
        <begin position="258"/>
        <end position="265"/>
    </location>
</feature>
<feature type="helix" evidence="8">
    <location>
        <begin position="270"/>
        <end position="277"/>
    </location>
</feature>
<feature type="helix" evidence="8">
    <location>
        <begin position="282"/>
        <end position="294"/>
    </location>
</feature>
<feature type="helix" evidence="8">
    <location>
        <begin position="300"/>
        <end position="319"/>
    </location>
</feature>
<protein>
    <recommendedName>
        <fullName>Flagellar motor switch protein FliG</fullName>
    </recommendedName>
</protein>